<reference key="1">
    <citation type="submission" date="2006-08" db="EMBL/GenBank/DDBJ databases">
        <title>Complete sequence of chromosome 1 of Burkholderia cepacia AMMD.</title>
        <authorList>
            <person name="Copeland A."/>
            <person name="Lucas S."/>
            <person name="Lapidus A."/>
            <person name="Barry K."/>
            <person name="Detter J.C."/>
            <person name="Glavina del Rio T."/>
            <person name="Hammon N."/>
            <person name="Israni S."/>
            <person name="Pitluck S."/>
            <person name="Bruce D."/>
            <person name="Chain P."/>
            <person name="Malfatti S."/>
            <person name="Shin M."/>
            <person name="Vergez L."/>
            <person name="Schmutz J."/>
            <person name="Larimer F."/>
            <person name="Land M."/>
            <person name="Hauser L."/>
            <person name="Kyrpides N."/>
            <person name="Kim E."/>
            <person name="Parke J."/>
            <person name="Coenye T."/>
            <person name="Konstantinidis K."/>
            <person name="Ramette A."/>
            <person name="Tiedje J."/>
            <person name="Richardson P."/>
        </authorList>
    </citation>
    <scope>NUCLEOTIDE SEQUENCE [LARGE SCALE GENOMIC DNA]</scope>
    <source>
        <strain>ATCC BAA-244 / DSM 16087 / CCUG 44356 / LMG 19182 / AMMD</strain>
    </source>
</reference>
<accession>Q0BIW4</accession>
<feature type="chain" id="PRO_1000063036" description="Imidazole glycerol phosphate synthase subunit HisF">
    <location>
        <begin position="1"/>
        <end position="257"/>
    </location>
</feature>
<feature type="active site" evidence="1">
    <location>
        <position position="12"/>
    </location>
</feature>
<feature type="active site" evidence="1">
    <location>
        <position position="131"/>
    </location>
</feature>
<name>HIS6_BURCM</name>
<sequence length="257" mass="27277">MALAKRIIPCLDVTAGRVVKGVNFVELRDAGDPVEIARRYDDQGADELTFLDITATSDQRDLILPIIEAVASQVFIPLTVGGGVRAVEDVRRLLNAGADKVSMNSSAVANPQLVRDAADKYGSQCIVVAIDAKRVSADGETPRWEVFTHGGRKNTGLDAIEWARKMAELGAGEILLTSMDRDGTKSGFDLALTRGVSDAVPVPVIASGGVGSLQHLADGIKDGRADAVLAASIFHYGEHTVGEAKRFMSDQGIPVRL</sequence>
<proteinExistence type="inferred from homology"/>
<dbReference type="EC" id="4.3.2.10" evidence="1"/>
<dbReference type="EMBL" id="CP000440">
    <property type="protein sequence ID" value="ABI85909.1"/>
    <property type="molecule type" value="Genomic_DNA"/>
</dbReference>
<dbReference type="RefSeq" id="WP_006751800.1">
    <property type="nucleotide sequence ID" value="NZ_CP009798.1"/>
</dbReference>
<dbReference type="SMR" id="Q0BIW4"/>
<dbReference type="GeneID" id="93084237"/>
<dbReference type="KEGG" id="bam:Bamb_0349"/>
<dbReference type="PATRIC" id="fig|339670.21.peg.1269"/>
<dbReference type="eggNOG" id="COG0107">
    <property type="taxonomic scope" value="Bacteria"/>
</dbReference>
<dbReference type="UniPathway" id="UPA00031">
    <property type="reaction ID" value="UER00010"/>
</dbReference>
<dbReference type="Proteomes" id="UP000000662">
    <property type="component" value="Chromosome 1"/>
</dbReference>
<dbReference type="GO" id="GO:0005737">
    <property type="term" value="C:cytoplasm"/>
    <property type="evidence" value="ECO:0007669"/>
    <property type="project" value="UniProtKB-SubCell"/>
</dbReference>
<dbReference type="GO" id="GO:0000107">
    <property type="term" value="F:imidazoleglycerol-phosphate synthase activity"/>
    <property type="evidence" value="ECO:0007669"/>
    <property type="project" value="UniProtKB-UniRule"/>
</dbReference>
<dbReference type="GO" id="GO:0016829">
    <property type="term" value="F:lyase activity"/>
    <property type="evidence" value="ECO:0007669"/>
    <property type="project" value="UniProtKB-KW"/>
</dbReference>
<dbReference type="GO" id="GO:0000105">
    <property type="term" value="P:L-histidine biosynthetic process"/>
    <property type="evidence" value="ECO:0007669"/>
    <property type="project" value="UniProtKB-UniRule"/>
</dbReference>
<dbReference type="CDD" id="cd04731">
    <property type="entry name" value="HisF"/>
    <property type="match status" value="1"/>
</dbReference>
<dbReference type="FunFam" id="3.20.20.70:FF:000006">
    <property type="entry name" value="Imidazole glycerol phosphate synthase subunit HisF"/>
    <property type="match status" value="1"/>
</dbReference>
<dbReference type="Gene3D" id="3.20.20.70">
    <property type="entry name" value="Aldolase class I"/>
    <property type="match status" value="1"/>
</dbReference>
<dbReference type="HAMAP" id="MF_01013">
    <property type="entry name" value="HisF"/>
    <property type="match status" value="1"/>
</dbReference>
<dbReference type="InterPro" id="IPR013785">
    <property type="entry name" value="Aldolase_TIM"/>
</dbReference>
<dbReference type="InterPro" id="IPR006062">
    <property type="entry name" value="His_biosynth"/>
</dbReference>
<dbReference type="InterPro" id="IPR004651">
    <property type="entry name" value="HisF"/>
</dbReference>
<dbReference type="InterPro" id="IPR050064">
    <property type="entry name" value="IGPS_HisA/HisF"/>
</dbReference>
<dbReference type="InterPro" id="IPR011060">
    <property type="entry name" value="RibuloseP-bd_barrel"/>
</dbReference>
<dbReference type="NCBIfam" id="TIGR00735">
    <property type="entry name" value="hisF"/>
    <property type="match status" value="1"/>
</dbReference>
<dbReference type="PANTHER" id="PTHR21235:SF2">
    <property type="entry name" value="IMIDAZOLE GLYCEROL PHOSPHATE SYNTHASE HISHF"/>
    <property type="match status" value="1"/>
</dbReference>
<dbReference type="PANTHER" id="PTHR21235">
    <property type="entry name" value="IMIDAZOLE GLYCEROL PHOSPHATE SYNTHASE SUBUNIT HISF/H IGP SYNTHASE SUBUNIT HISF/H"/>
    <property type="match status" value="1"/>
</dbReference>
<dbReference type="Pfam" id="PF00977">
    <property type="entry name" value="His_biosynth"/>
    <property type="match status" value="1"/>
</dbReference>
<dbReference type="SUPFAM" id="SSF51366">
    <property type="entry name" value="Ribulose-phoshate binding barrel"/>
    <property type="match status" value="1"/>
</dbReference>
<comment type="function">
    <text evidence="1">IGPS catalyzes the conversion of PRFAR and glutamine to IGP, AICAR and glutamate. The HisF subunit catalyzes the cyclization activity that produces IGP and AICAR from PRFAR using the ammonia provided by the HisH subunit.</text>
</comment>
<comment type="catalytic activity">
    <reaction evidence="1">
        <text>5-[(5-phospho-1-deoxy-D-ribulos-1-ylimino)methylamino]-1-(5-phospho-beta-D-ribosyl)imidazole-4-carboxamide + L-glutamine = D-erythro-1-(imidazol-4-yl)glycerol 3-phosphate + 5-amino-1-(5-phospho-beta-D-ribosyl)imidazole-4-carboxamide + L-glutamate + H(+)</text>
        <dbReference type="Rhea" id="RHEA:24793"/>
        <dbReference type="ChEBI" id="CHEBI:15378"/>
        <dbReference type="ChEBI" id="CHEBI:29985"/>
        <dbReference type="ChEBI" id="CHEBI:58278"/>
        <dbReference type="ChEBI" id="CHEBI:58359"/>
        <dbReference type="ChEBI" id="CHEBI:58475"/>
        <dbReference type="ChEBI" id="CHEBI:58525"/>
        <dbReference type="EC" id="4.3.2.10"/>
    </reaction>
</comment>
<comment type="pathway">
    <text evidence="1">Amino-acid biosynthesis; L-histidine biosynthesis; L-histidine from 5-phospho-alpha-D-ribose 1-diphosphate: step 5/9.</text>
</comment>
<comment type="subunit">
    <text evidence="1">Heterodimer of HisH and HisF.</text>
</comment>
<comment type="subcellular location">
    <subcellularLocation>
        <location evidence="1">Cytoplasm</location>
    </subcellularLocation>
</comment>
<comment type="similarity">
    <text evidence="1">Belongs to the HisA/HisF family.</text>
</comment>
<gene>
    <name evidence="1" type="primary">hisF</name>
    <name type="ordered locus">Bamb_0349</name>
</gene>
<organism>
    <name type="scientific">Burkholderia ambifaria (strain ATCC BAA-244 / DSM 16087 / CCUG 44356 / LMG 19182 / AMMD)</name>
    <name type="common">Burkholderia cepacia (strain AMMD)</name>
    <dbReference type="NCBI Taxonomy" id="339670"/>
    <lineage>
        <taxon>Bacteria</taxon>
        <taxon>Pseudomonadati</taxon>
        <taxon>Pseudomonadota</taxon>
        <taxon>Betaproteobacteria</taxon>
        <taxon>Burkholderiales</taxon>
        <taxon>Burkholderiaceae</taxon>
        <taxon>Burkholderia</taxon>
        <taxon>Burkholderia cepacia complex</taxon>
    </lineage>
</organism>
<evidence type="ECO:0000255" key="1">
    <source>
        <dbReference type="HAMAP-Rule" id="MF_01013"/>
    </source>
</evidence>
<protein>
    <recommendedName>
        <fullName evidence="1">Imidazole glycerol phosphate synthase subunit HisF</fullName>
        <ecNumber evidence="1">4.3.2.10</ecNumber>
    </recommendedName>
    <alternativeName>
        <fullName evidence="1">IGP synthase cyclase subunit</fullName>
    </alternativeName>
    <alternativeName>
        <fullName evidence="1">IGP synthase subunit HisF</fullName>
    </alternativeName>
    <alternativeName>
        <fullName evidence="1">ImGP synthase subunit HisF</fullName>
        <shortName evidence="1">IGPS subunit HisF</shortName>
    </alternativeName>
</protein>
<keyword id="KW-0028">Amino-acid biosynthesis</keyword>
<keyword id="KW-0963">Cytoplasm</keyword>
<keyword id="KW-0368">Histidine biosynthesis</keyword>
<keyword id="KW-0456">Lyase</keyword>